<dbReference type="EC" id="2.7.8.32"/>
<dbReference type="EMBL" id="GQ403790">
    <property type="protein sequence ID" value="ACY41153.1"/>
    <property type="molecule type" value="mRNA"/>
</dbReference>
<dbReference type="GlyCosmos" id="D0U690">
    <property type="glycosylation" value="3 sites, No reported glycans"/>
</dbReference>
<dbReference type="KEGG" id="ag:ACY41153"/>
<dbReference type="BioCyc" id="MetaCyc:MONOMER-15994"/>
<dbReference type="BRENDA" id="2.7.8.32">
    <property type="organism ID" value="1723"/>
</dbReference>
<dbReference type="GO" id="GO:0000139">
    <property type="term" value="C:Golgi membrane"/>
    <property type="evidence" value="ECO:0007669"/>
    <property type="project" value="UniProtKB-SubCell"/>
</dbReference>
<dbReference type="GO" id="GO:0016757">
    <property type="term" value="F:glycosyltransferase activity"/>
    <property type="evidence" value="ECO:0007669"/>
    <property type="project" value="UniProtKB-KW"/>
</dbReference>
<dbReference type="GO" id="GO:0003976">
    <property type="term" value="F:UDP-N-acetylglucosamine-lysosomal-enzyme N-acetylglucosaminephosphotransferase activity"/>
    <property type="evidence" value="ECO:0007669"/>
    <property type="project" value="TreeGrafter"/>
</dbReference>
<dbReference type="GO" id="GO:0046835">
    <property type="term" value="P:carbohydrate phosphorylation"/>
    <property type="evidence" value="ECO:0007669"/>
    <property type="project" value="TreeGrafter"/>
</dbReference>
<dbReference type="GO" id="GO:0042732">
    <property type="term" value="P:D-xylose metabolic process"/>
    <property type="evidence" value="ECO:0007669"/>
    <property type="project" value="UniProtKB-KW"/>
</dbReference>
<dbReference type="InterPro" id="IPR047141">
    <property type="entry name" value="Stealth"/>
</dbReference>
<dbReference type="InterPro" id="IPR031357">
    <property type="entry name" value="Stealth_CR3"/>
</dbReference>
<dbReference type="InterPro" id="IPR031356">
    <property type="entry name" value="Stealth_CR4"/>
</dbReference>
<dbReference type="PANTHER" id="PTHR24045">
    <property type="match status" value="1"/>
</dbReference>
<dbReference type="PANTHER" id="PTHR24045:SF0">
    <property type="entry name" value="N-ACETYLGLUCOSAMINE-1-PHOSPHOTRANSFERASE SUBUNITS ALPHA_BETA"/>
    <property type="match status" value="1"/>
</dbReference>
<dbReference type="Pfam" id="PF17102">
    <property type="entry name" value="Stealth_CR3"/>
    <property type="match status" value="1"/>
</dbReference>
<dbReference type="Pfam" id="PF17103">
    <property type="entry name" value="Stealth_CR4"/>
    <property type="match status" value="1"/>
</dbReference>
<name>XPT1_CRYNV</name>
<keyword id="KW-0119">Carbohydrate metabolism</keyword>
<keyword id="KW-0325">Glycoprotein</keyword>
<keyword id="KW-0328">Glycosyltransferase</keyword>
<keyword id="KW-0333">Golgi apparatus</keyword>
<keyword id="KW-0464">Manganese</keyword>
<keyword id="KW-0472">Membrane</keyword>
<keyword id="KW-0808">Transferase</keyword>
<keyword id="KW-0812">Transmembrane</keyword>
<keyword id="KW-1133">Transmembrane helix</keyword>
<keyword id="KW-0859">Xylose metabolism</keyword>
<proteinExistence type="evidence at protein level"/>
<accession>D0U690</accession>
<sequence>MPSTALSPPSRPPAQSYDSYSSSLSPSSPRFHAAAGSHGRRSPSPSRLESLLDGPHVPPRSPSRKIRSALSRHIRPHITPRTLTPVFLWTLALWLIHHFLFPLSSPFAKLAKPKAEEHFLSTTFPPPAQRLGDDRLDSVDPRWRAYHPLPAPEPPFPRLRPTRFLPPQCLEQWFAEGETLCGAKEMGEEETLDATWLWVNGSDHRWRDSMVEWREKENVNSPERHYREQNELVHSMRSVLDALPGHLRTFHLILADYPFNYPEDLELVPSSIIPDLEVAASKSKGRRHPRELPGAPASLANLTERVTPESISPTLASHLQSEWRILQTPTWLDFSRRDPSDPSHPFHPYSVSKAGEIRQHYAEASYPTLRYASHWEVFHIPSVDRDGRQELMGEREWRENEWKKKALPSFNSMAIESRIGWLPGLADAIIALNDDFFLLRPHAVSDFHSPLYGSVIRFEHGYNQQVKPDVEKNHINDPGEMGGLYHANALLSRRFPRRLRPYFAHVPKVITRGLHHEASLMFQEALTESSTRRFREMKIGEGDVQMQWLLTSLRVERWREALLWTWTVANMGTLGGSQDHWDNDTRRAIKNLFGFTENDDDVVKIEVHRGERWTLEPGRMQRVFRQAGWEAPKATEFLFSSMDGIMPPLLRSGEDPAQNDRCIIDLNRCFGLFWTREEDVLSSDMMKRLTFQYPECGDCMIMALVTASGTLGLNAFFPPKETTITAPELGPGDAYPKFLPPPHLPLTPTWHEADFSLANILSTTALPGEQVDIRQYCMRLLSRYLYLDAKSVSHFHMMKSAEHARRVFRMIQGDPKVSILGMNDDIESDYDEVRGLMNEWFEMRWPRKAVWERDWDPVKDRYND</sequence>
<organism>
    <name type="scientific">Cryptococcus neoformans var. grubii</name>
    <name type="common">Filobasidiella neoformans var. grubii</name>
    <dbReference type="NCBI Taxonomy" id="178876"/>
    <lineage>
        <taxon>Eukaryota</taxon>
        <taxon>Fungi</taxon>
        <taxon>Dikarya</taxon>
        <taxon>Basidiomycota</taxon>
        <taxon>Agaricomycotina</taxon>
        <taxon>Tremellomycetes</taxon>
        <taxon>Tremellales</taxon>
        <taxon>Cryptococcaceae</taxon>
        <taxon>Cryptococcus</taxon>
        <taxon>Cryptococcus neoformans species complex</taxon>
    </lineage>
</organism>
<protein>
    <recommendedName>
        <fullName>3-O-alpha-D-mannopyranosyl-alpha-D-mannopyranose xylosylphosphotransferase</fullName>
        <ecNumber>2.7.8.32</ecNumber>
    </recommendedName>
    <alternativeName>
        <fullName>Xylosylphosphotransferase 1</fullName>
    </alternativeName>
</protein>
<reference key="1">
    <citation type="journal article" date="2009" name="J. Biol. Chem.">
        <title>A novel xylosylphosphotransferase activity discovered in Cryptococcus neoformans.</title>
        <authorList>
            <person name="Reilly M.C."/>
            <person name="Levery S.B."/>
            <person name="Castle S.A."/>
            <person name="Klutts J.S."/>
            <person name="Doering T.L."/>
        </authorList>
    </citation>
    <scope>NUCLEOTIDE SEQUENCE [MRNA]</scope>
    <scope>CATALYTIC ACTIVITY</scope>
    <scope>COFACTOR</scope>
    <scope>FUNCTION</scope>
    <source>
        <strain>KN99alpha</strain>
    </source>
</reference>
<reference key="2">
    <citation type="journal article" date="2011" name="J. Biol. Chem.">
        <title>A xylosylphosphotransferase of Cryptococcus neoformans acts in protein O-glycan synthesis.</title>
        <authorList>
            <person name="Reilly M.C."/>
            <person name="Aoki K."/>
            <person name="Wang Z.A."/>
            <person name="Skowyra M.L."/>
            <person name="Williams M."/>
            <person name="Tiemeyer M."/>
            <person name="Doering T.L."/>
        </authorList>
    </citation>
    <scope>FUNCTION</scope>
    <scope>SUBCELLULAR LOCATION</scope>
</reference>
<gene>
    <name type="primary">XPT1</name>
</gene>
<feature type="chain" id="PRO_0000418544" description="3-O-alpha-D-mannopyranosyl-alpha-D-mannopyranose xylosylphosphotransferase">
    <location>
        <begin position="1"/>
        <end position="864"/>
    </location>
</feature>
<feature type="topological domain" description="Cytoplasmic" evidence="1">
    <location>
        <begin position="1"/>
        <end position="82"/>
    </location>
</feature>
<feature type="transmembrane region" description="Helical" evidence="1">
    <location>
        <begin position="83"/>
        <end position="103"/>
    </location>
</feature>
<feature type="topological domain" description="Lumenal" evidence="1">
    <location>
        <begin position="104"/>
        <end position="864"/>
    </location>
</feature>
<feature type="region of interest" description="Disordered" evidence="2">
    <location>
        <begin position="1"/>
        <end position="66"/>
    </location>
</feature>
<feature type="compositionally biased region" description="Low complexity" evidence="2">
    <location>
        <begin position="16"/>
        <end position="29"/>
    </location>
</feature>
<feature type="compositionally biased region" description="Low complexity" evidence="2">
    <location>
        <begin position="42"/>
        <end position="52"/>
    </location>
</feature>
<feature type="glycosylation site" description="N-linked (GlcNAc...) asparagine" evidence="1">
    <location>
        <position position="200"/>
    </location>
</feature>
<feature type="glycosylation site" description="N-linked (GlcNAc...) asparagine" evidence="1">
    <location>
        <position position="301"/>
    </location>
</feature>
<feature type="glycosylation site" description="N-linked (GlcNAc...) asparagine" evidence="1">
    <location>
        <position position="583"/>
    </location>
</feature>
<comment type="function">
    <text evidence="3 4">Xylosylphosphotransferase that is specific for UDP-xylose as a donor and mannose as an acceptor to form a xylose-alpha-1-phosphate-6-mannose linkage. Functions in the O-glycosylation of proteins en route through the secretory pathway.</text>
</comment>
<comment type="catalytic activity">
    <reaction evidence="3">
        <text>3-alpha-D-mannopyranosyl-alpha-D-mannopyranose + UDP-alpha-D-xylose = 3-O-(6-O-alpha-D-xylosylphospho-alpha-D-mannopyranosyl)-alpha-D-mannopyranose + UMP + H(+)</text>
        <dbReference type="Rhea" id="RHEA:28262"/>
        <dbReference type="ChEBI" id="CHEBI:15378"/>
        <dbReference type="ChEBI" id="CHEBI:57632"/>
        <dbReference type="ChEBI" id="CHEBI:57865"/>
        <dbReference type="ChEBI" id="CHEBI:61663"/>
        <dbReference type="ChEBI" id="CHEBI:61665"/>
        <dbReference type="EC" id="2.7.8.32"/>
    </reaction>
</comment>
<comment type="cofactor">
    <cofactor evidence="3">
        <name>Mn(2+)</name>
        <dbReference type="ChEBI" id="CHEBI:29035"/>
    </cofactor>
</comment>
<comment type="subcellular location">
    <subcellularLocation>
        <location evidence="4">Golgi apparatus membrane</location>
        <topology evidence="4">Single-pass type I membrane protein</topology>
    </subcellularLocation>
</comment>
<comment type="similarity">
    <text evidence="5">Belongs to the XPT1 family.</text>
</comment>
<evidence type="ECO:0000255" key="1"/>
<evidence type="ECO:0000256" key="2">
    <source>
        <dbReference type="SAM" id="MobiDB-lite"/>
    </source>
</evidence>
<evidence type="ECO:0000269" key="3">
    <source>
    </source>
</evidence>
<evidence type="ECO:0000269" key="4">
    <source>
    </source>
</evidence>
<evidence type="ECO:0000305" key="5"/>